<name>Y1633_ARCFU</name>
<proteinExistence type="predicted"/>
<reference key="1">
    <citation type="journal article" date="1997" name="Nature">
        <title>The complete genome sequence of the hyperthermophilic, sulphate-reducing archaeon Archaeoglobus fulgidus.</title>
        <authorList>
            <person name="Klenk H.-P."/>
            <person name="Clayton R.A."/>
            <person name="Tomb J.-F."/>
            <person name="White O."/>
            <person name="Nelson K.E."/>
            <person name="Ketchum K.A."/>
            <person name="Dodson R.J."/>
            <person name="Gwinn M.L."/>
            <person name="Hickey E.K."/>
            <person name="Peterson J.D."/>
            <person name="Richardson D.L."/>
            <person name="Kerlavage A.R."/>
            <person name="Graham D.E."/>
            <person name="Kyrpides N.C."/>
            <person name="Fleischmann R.D."/>
            <person name="Quackenbush J."/>
            <person name="Lee N.H."/>
            <person name="Sutton G.G."/>
            <person name="Gill S.R."/>
            <person name="Kirkness E.F."/>
            <person name="Dougherty B.A."/>
            <person name="McKenney K."/>
            <person name="Adams M.D."/>
            <person name="Loftus B.J."/>
            <person name="Peterson S.N."/>
            <person name="Reich C.I."/>
            <person name="McNeil L.K."/>
            <person name="Badger J.H."/>
            <person name="Glodek A."/>
            <person name="Zhou L."/>
            <person name="Overbeek R."/>
            <person name="Gocayne J.D."/>
            <person name="Weidman J.F."/>
            <person name="McDonald L.A."/>
            <person name="Utterback T.R."/>
            <person name="Cotton M.D."/>
            <person name="Spriggs T."/>
            <person name="Artiach P."/>
            <person name="Kaine B.P."/>
            <person name="Sykes S.M."/>
            <person name="Sadow P.W."/>
            <person name="D'Andrea K.P."/>
            <person name="Bowman C."/>
            <person name="Fujii C."/>
            <person name="Garland S.A."/>
            <person name="Mason T.M."/>
            <person name="Olsen G.J."/>
            <person name="Fraser C.M."/>
            <person name="Smith H.O."/>
            <person name="Woese C.R."/>
            <person name="Venter J.C."/>
        </authorList>
    </citation>
    <scope>NUCLEOTIDE SEQUENCE [LARGE SCALE GENOMIC DNA]</scope>
    <source>
        <strain>ATCC 49558 / DSM 4304 / JCM 9628 / NBRC 100126 / VC-16</strain>
    </source>
</reference>
<keyword id="KW-1003">Cell membrane</keyword>
<keyword id="KW-0472">Membrane</keyword>
<keyword id="KW-1185">Reference proteome</keyword>
<keyword id="KW-0812">Transmembrane</keyword>
<keyword id="KW-1133">Transmembrane helix</keyword>
<feature type="chain" id="PRO_0000128041" description="Uncharacterized protein AF_1633">
    <location>
        <begin position="1"/>
        <end position="227"/>
    </location>
</feature>
<feature type="transmembrane region" description="Helical" evidence="1">
    <location>
        <begin position="109"/>
        <end position="128"/>
    </location>
</feature>
<feature type="transmembrane region" description="Helical" evidence="1">
    <location>
        <begin position="173"/>
        <end position="192"/>
    </location>
</feature>
<feature type="transmembrane region" description="Helical" evidence="1">
    <location>
        <begin position="199"/>
        <end position="221"/>
    </location>
</feature>
<protein>
    <recommendedName>
        <fullName>Uncharacterized protein AF_1633</fullName>
    </recommendedName>
</protein>
<comment type="subcellular location">
    <subcellularLocation>
        <location evidence="2">Cell membrane</location>
        <topology evidence="2">Multi-pass membrane protein</topology>
    </subcellularLocation>
</comment>
<dbReference type="EMBL" id="AE000782">
    <property type="protein sequence ID" value="AAB89618.1"/>
    <property type="molecule type" value="Genomic_DNA"/>
</dbReference>
<dbReference type="PIR" id="H69453">
    <property type="entry name" value="H69453"/>
</dbReference>
<dbReference type="STRING" id="224325.AF_1633"/>
<dbReference type="PaxDb" id="224325-AF_1633"/>
<dbReference type="DNASU" id="1484858"/>
<dbReference type="EnsemblBacteria" id="AAB89618">
    <property type="protein sequence ID" value="AAB89618"/>
    <property type="gene ID" value="AF_1633"/>
</dbReference>
<dbReference type="KEGG" id="afu:AF_1633"/>
<dbReference type="eggNOG" id="arCOG12210">
    <property type="taxonomic scope" value="Archaea"/>
</dbReference>
<dbReference type="HOGENOM" id="CLU_099314_0_0_2"/>
<dbReference type="Proteomes" id="UP000002199">
    <property type="component" value="Chromosome"/>
</dbReference>
<dbReference type="GO" id="GO:0005886">
    <property type="term" value="C:plasma membrane"/>
    <property type="evidence" value="ECO:0007669"/>
    <property type="project" value="UniProtKB-SubCell"/>
</dbReference>
<evidence type="ECO:0000255" key="1"/>
<evidence type="ECO:0000305" key="2"/>
<sequence length="227" mass="25314">MIDMLKKGLEKTLKFFPRLEDLAEVFDPLHRGEAFASSPNPRSIERKYILNVPTLKAKSSVEKITDGQSYEILGQPTGFEISEVKTAEGEIKIRIDFVNNIFADVMKIMCNVGLVLMMVFAAFYFAGINPADNLNLEVQKWSEPAEKFWSDVKGIHSTGYSWFLQNPLDPENAILLSVTLLALTPVIGILLTIPRSTGALRVIFLVIAVEFVYAIFRVMMGGGPMGH</sequence>
<gene>
    <name type="ordered locus">AF_1633</name>
</gene>
<accession>O28640</accession>
<organism>
    <name type="scientific">Archaeoglobus fulgidus (strain ATCC 49558 / DSM 4304 / JCM 9628 / NBRC 100126 / VC-16)</name>
    <dbReference type="NCBI Taxonomy" id="224325"/>
    <lineage>
        <taxon>Archaea</taxon>
        <taxon>Methanobacteriati</taxon>
        <taxon>Methanobacteriota</taxon>
        <taxon>Archaeoglobi</taxon>
        <taxon>Archaeoglobales</taxon>
        <taxon>Archaeoglobaceae</taxon>
        <taxon>Archaeoglobus</taxon>
    </lineage>
</organism>